<dbReference type="EC" id="6.1.1.14" evidence="1"/>
<dbReference type="EMBL" id="CP000414">
    <property type="protein sequence ID" value="ABJ62292.1"/>
    <property type="molecule type" value="Genomic_DNA"/>
</dbReference>
<dbReference type="RefSeq" id="WP_011679924.1">
    <property type="nucleotide sequence ID" value="NC_008531.1"/>
</dbReference>
<dbReference type="SMR" id="Q03WY0"/>
<dbReference type="EnsemblBacteria" id="ABJ62292">
    <property type="protein sequence ID" value="ABJ62292"/>
    <property type="gene ID" value="LEUM_1194"/>
</dbReference>
<dbReference type="GeneID" id="29575772"/>
<dbReference type="KEGG" id="lme:LEUM_1194"/>
<dbReference type="eggNOG" id="COG0752">
    <property type="taxonomic scope" value="Bacteria"/>
</dbReference>
<dbReference type="HOGENOM" id="CLU_057066_1_0_9"/>
<dbReference type="Proteomes" id="UP000000362">
    <property type="component" value="Chromosome"/>
</dbReference>
<dbReference type="GO" id="GO:0005829">
    <property type="term" value="C:cytosol"/>
    <property type="evidence" value="ECO:0007669"/>
    <property type="project" value="TreeGrafter"/>
</dbReference>
<dbReference type="GO" id="GO:0005524">
    <property type="term" value="F:ATP binding"/>
    <property type="evidence" value="ECO:0007669"/>
    <property type="project" value="UniProtKB-UniRule"/>
</dbReference>
<dbReference type="GO" id="GO:0140096">
    <property type="term" value="F:catalytic activity, acting on a protein"/>
    <property type="evidence" value="ECO:0007669"/>
    <property type="project" value="UniProtKB-ARBA"/>
</dbReference>
<dbReference type="GO" id="GO:0004820">
    <property type="term" value="F:glycine-tRNA ligase activity"/>
    <property type="evidence" value="ECO:0007669"/>
    <property type="project" value="UniProtKB-UniRule"/>
</dbReference>
<dbReference type="GO" id="GO:0016740">
    <property type="term" value="F:transferase activity"/>
    <property type="evidence" value="ECO:0007669"/>
    <property type="project" value="UniProtKB-ARBA"/>
</dbReference>
<dbReference type="GO" id="GO:0006426">
    <property type="term" value="P:glycyl-tRNA aminoacylation"/>
    <property type="evidence" value="ECO:0007669"/>
    <property type="project" value="UniProtKB-UniRule"/>
</dbReference>
<dbReference type="CDD" id="cd00733">
    <property type="entry name" value="GlyRS_alpha_core"/>
    <property type="match status" value="1"/>
</dbReference>
<dbReference type="FunFam" id="3.30.930.10:FF:000006">
    <property type="entry name" value="Glycine--tRNA ligase alpha subunit"/>
    <property type="match status" value="1"/>
</dbReference>
<dbReference type="Gene3D" id="3.30.930.10">
    <property type="entry name" value="Bira Bifunctional Protein, Domain 2"/>
    <property type="match status" value="1"/>
</dbReference>
<dbReference type="Gene3D" id="1.20.58.180">
    <property type="entry name" value="Class II aaRS and biotin synthetases, domain 2"/>
    <property type="match status" value="1"/>
</dbReference>
<dbReference type="HAMAP" id="MF_00254">
    <property type="entry name" value="Gly_tRNA_synth_alpha"/>
    <property type="match status" value="1"/>
</dbReference>
<dbReference type="InterPro" id="IPR045864">
    <property type="entry name" value="aa-tRNA-synth_II/BPL/LPL"/>
</dbReference>
<dbReference type="InterPro" id="IPR006194">
    <property type="entry name" value="Gly-tRNA-synth_heterodimer"/>
</dbReference>
<dbReference type="InterPro" id="IPR002310">
    <property type="entry name" value="Gly-tRNA_ligase_asu"/>
</dbReference>
<dbReference type="NCBIfam" id="TIGR00388">
    <property type="entry name" value="glyQ"/>
    <property type="match status" value="1"/>
</dbReference>
<dbReference type="NCBIfam" id="NF006827">
    <property type="entry name" value="PRK09348.1"/>
    <property type="match status" value="1"/>
</dbReference>
<dbReference type="PANTHER" id="PTHR30075:SF2">
    <property type="entry name" value="GLYCINE--TRNA LIGASE, CHLOROPLASTIC_MITOCHONDRIAL 2"/>
    <property type="match status" value="1"/>
</dbReference>
<dbReference type="PANTHER" id="PTHR30075">
    <property type="entry name" value="GLYCYL-TRNA SYNTHETASE"/>
    <property type="match status" value="1"/>
</dbReference>
<dbReference type="Pfam" id="PF02091">
    <property type="entry name" value="tRNA-synt_2e"/>
    <property type="match status" value="1"/>
</dbReference>
<dbReference type="PRINTS" id="PR01044">
    <property type="entry name" value="TRNASYNTHGA"/>
</dbReference>
<dbReference type="SUPFAM" id="SSF55681">
    <property type="entry name" value="Class II aaRS and biotin synthetases"/>
    <property type="match status" value="1"/>
</dbReference>
<dbReference type="PROSITE" id="PS50861">
    <property type="entry name" value="AA_TRNA_LIGASE_II_GLYAB"/>
    <property type="match status" value="1"/>
</dbReference>
<reference key="1">
    <citation type="journal article" date="2006" name="Proc. Natl. Acad. Sci. U.S.A.">
        <title>Comparative genomics of the lactic acid bacteria.</title>
        <authorList>
            <person name="Makarova K.S."/>
            <person name="Slesarev A."/>
            <person name="Wolf Y.I."/>
            <person name="Sorokin A."/>
            <person name="Mirkin B."/>
            <person name="Koonin E.V."/>
            <person name="Pavlov A."/>
            <person name="Pavlova N."/>
            <person name="Karamychev V."/>
            <person name="Polouchine N."/>
            <person name="Shakhova V."/>
            <person name="Grigoriev I."/>
            <person name="Lou Y."/>
            <person name="Rohksar D."/>
            <person name="Lucas S."/>
            <person name="Huang K."/>
            <person name="Goodstein D.M."/>
            <person name="Hawkins T."/>
            <person name="Plengvidhya V."/>
            <person name="Welker D."/>
            <person name="Hughes J."/>
            <person name="Goh Y."/>
            <person name="Benson A."/>
            <person name="Baldwin K."/>
            <person name="Lee J.-H."/>
            <person name="Diaz-Muniz I."/>
            <person name="Dosti B."/>
            <person name="Smeianov V."/>
            <person name="Wechter W."/>
            <person name="Barabote R."/>
            <person name="Lorca G."/>
            <person name="Altermann E."/>
            <person name="Barrangou R."/>
            <person name="Ganesan B."/>
            <person name="Xie Y."/>
            <person name="Rawsthorne H."/>
            <person name="Tamir D."/>
            <person name="Parker C."/>
            <person name="Breidt F."/>
            <person name="Broadbent J.R."/>
            <person name="Hutkins R."/>
            <person name="O'Sullivan D."/>
            <person name="Steele J."/>
            <person name="Unlu G."/>
            <person name="Saier M.H. Jr."/>
            <person name="Klaenhammer T."/>
            <person name="Richardson P."/>
            <person name="Kozyavkin S."/>
            <person name="Weimer B.C."/>
            <person name="Mills D.A."/>
        </authorList>
    </citation>
    <scope>NUCLEOTIDE SEQUENCE [LARGE SCALE GENOMIC DNA]</scope>
    <source>
        <strain>ATCC 8293 / DSM 20343 / BCRC 11652 / CCM 1803 / JCM 6124 / NCDO 523 / NBRC 100496 / NCIMB 8023 / NCTC 12954 / NRRL B-1118 / 37Y</strain>
    </source>
</reference>
<accession>Q03WY0</accession>
<feature type="chain" id="PRO_1000047441" description="Glycine--tRNA ligase alpha subunit">
    <location>
        <begin position="1"/>
        <end position="313"/>
    </location>
</feature>
<name>SYGA_LEUMM</name>
<sequence length="313" mass="35833">MTNEKLSLQDIILTLQQYWAKQGANLMQAYDNEVGAGTQSPYTFLRANGPEPWNAAYVQPSRRPADGRYGDNPNRLFQHHQFQVVMKPSPENIQELYLGSLEALGIKALEHDIRFVEDNWENPSMGAAGIGWEVWLDGMEVTQFTYFQQVGGIEVDSVTAEVTYGLERLASYIQNVPTVYDLEWGNGVLYGDIFKEPEFEHSKYAFEESNQDMLLRHFEEFEAEATRLLDLGLVHPAYDYILKSSHTFNLLDARGTVSVTERAGYLHRIRTMARKVSKVFIEERAKLGFPLLKDQTLRDKYLGKNGKYTKENA</sequence>
<protein>
    <recommendedName>
        <fullName evidence="1">Glycine--tRNA ligase alpha subunit</fullName>
        <ecNumber evidence="1">6.1.1.14</ecNumber>
    </recommendedName>
    <alternativeName>
        <fullName evidence="1">Glycyl-tRNA synthetase alpha subunit</fullName>
        <shortName evidence="1">GlyRS</shortName>
    </alternativeName>
</protein>
<evidence type="ECO:0000255" key="1">
    <source>
        <dbReference type="HAMAP-Rule" id="MF_00254"/>
    </source>
</evidence>
<organism>
    <name type="scientific">Leuconostoc mesenteroides subsp. mesenteroides (strain ATCC 8293 / DSM 20343 / BCRC 11652 / CCM 1803 / JCM 6124 / NCDO 523 / NBRC 100496 / NCIMB 8023 / NCTC 12954 / NRRL B-1118 / 37Y)</name>
    <dbReference type="NCBI Taxonomy" id="203120"/>
    <lineage>
        <taxon>Bacteria</taxon>
        <taxon>Bacillati</taxon>
        <taxon>Bacillota</taxon>
        <taxon>Bacilli</taxon>
        <taxon>Lactobacillales</taxon>
        <taxon>Lactobacillaceae</taxon>
        <taxon>Leuconostoc</taxon>
    </lineage>
</organism>
<keyword id="KW-0030">Aminoacyl-tRNA synthetase</keyword>
<keyword id="KW-0067">ATP-binding</keyword>
<keyword id="KW-0963">Cytoplasm</keyword>
<keyword id="KW-0436">Ligase</keyword>
<keyword id="KW-0547">Nucleotide-binding</keyword>
<keyword id="KW-0648">Protein biosynthesis</keyword>
<keyword id="KW-1185">Reference proteome</keyword>
<proteinExistence type="inferred from homology"/>
<comment type="catalytic activity">
    <reaction evidence="1">
        <text>tRNA(Gly) + glycine + ATP = glycyl-tRNA(Gly) + AMP + diphosphate</text>
        <dbReference type="Rhea" id="RHEA:16013"/>
        <dbReference type="Rhea" id="RHEA-COMP:9664"/>
        <dbReference type="Rhea" id="RHEA-COMP:9683"/>
        <dbReference type="ChEBI" id="CHEBI:30616"/>
        <dbReference type="ChEBI" id="CHEBI:33019"/>
        <dbReference type="ChEBI" id="CHEBI:57305"/>
        <dbReference type="ChEBI" id="CHEBI:78442"/>
        <dbReference type="ChEBI" id="CHEBI:78522"/>
        <dbReference type="ChEBI" id="CHEBI:456215"/>
        <dbReference type="EC" id="6.1.1.14"/>
    </reaction>
</comment>
<comment type="subunit">
    <text evidence="1">Tetramer of two alpha and two beta subunits.</text>
</comment>
<comment type="subcellular location">
    <subcellularLocation>
        <location evidence="1">Cytoplasm</location>
    </subcellularLocation>
</comment>
<comment type="similarity">
    <text evidence="1">Belongs to the class-II aminoacyl-tRNA synthetase family.</text>
</comment>
<gene>
    <name evidence="1" type="primary">glyQ</name>
    <name type="ordered locus">LEUM_1194</name>
</gene>